<evidence type="ECO:0000255" key="1"/>
<evidence type="ECO:0000256" key="2">
    <source>
        <dbReference type="SAM" id="MobiDB-lite"/>
    </source>
</evidence>
<evidence type="ECO:0000269" key="3">
    <source>
    </source>
</evidence>
<evidence type="ECO:0000305" key="4"/>
<evidence type="ECO:0007744" key="5">
    <source>
    </source>
</evidence>
<organism>
    <name type="scientific">Homo sapiens</name>
    <name type="common">Human</name>
    <dbReference type="NCBI Taxonomy" id="9606"/>
    <lineage>
        <taxon>Eukaryota</taxon>
        <taxon>Metazoa</taxon>
        <taxon>Chordata</taxon>
        <taxon>Craniata</taxon>
        <taxon>Vertebrata</taxon>
        <taxon>Euteleostomi</taxon>
        <taxon>Mammalia</taxon>
        <taxon>Eutheria</taxon>
        <taxon>Euarchontoglires</taxon>
        <taxon>Primates</taxon>
        <taxon>Haplorrhini</taxon>
        <taxon>Catarrhini</taxon>
        <taxon>Hominidae</taxon>
        <taxon>Homo</taxon>
    </lineage>
</organism>
<comment type="function">
    <text evidence="3">Involved in the maintenance of mitochondrial membrane potential in pancreatic ductal adenocarcinoma (PDAC) cells. Promotes pancreatic ductal adenocarcinoma (PDAC) cell growth. May play a role as a nucleotide-sugar transporter.</text>
</comment>
<comment type="subunit">
    <text evidence="3">Interacts with SLC25A5.</text>
</comment>
<comment type="interaction">
    <interactant intactId="EBI-713484">
        <id>Q8N357</id>
    </interactant>
    <interactant intactId="EBI-13059134">
        <id>Q13520</id>
        <label>AQP6</label>
    </interactant>
    <organismsDiffer>false</organismsDiffer>
    <experiments>3</experiments>
</comment>
<comment type="interaction">
    <interactant intactId="EBI-713484">
        <id>Q8N357</id>
    </interactant>
    <interactant intactId="EBI-19051169">
        <id>Q8N350-4</id>
        <label>CBARP</label>
    </interactant>
    <organismsDiffer>false</organismsDiffer>
    <experiments>3</experiments>
</comment>
<comment type="interaction">
    <interactant intactId="EBI-713484">
        <id>Q8N357</id>
    </interactant>
    <interactant intactId="EBI-2622997">
        <id>Q9HA82</id>
        <label>CERS4</label>
    </interactant>
    <organismsDiffer>false</organismsDiffer>
    <experiments>3</experiments>
</comment>
<comment type="interaction">
    <interactant intactId="EBI-713484">
        <id>Q8N357</id>
    </interactant>
    <interactant intactId="EBI-2556557">
        <id>P15328</id>
        <label>FOLR1</label>
    </interactant>
    <organismsDiffer>false</organismsDiffer>
    <experiments>3</experiments>
</comment>
<comment type="interaction">
    <interactant intactId="EBI-713484">
        <id>Q8N357</id>
    </interactant>
    <interactant intactId="EBI-17458373">
        <id>P48165</id>
        <label>GJA8</label>
    </interactant>
    <organismsDiffer>false</organismsDiffer>
    <experiments>3</experiments>
</comment>
<comment type="interaction">
    <interactant intactId="EBI-713484">
        <id>Q8N357</id>
    </interactant>
    <interactant intactId="EBI-13345167">
        <id>Q8TDT2</id>
        <label>GPR152</label>
    </interactant>
    <organismsDiffer>false</organismsDiffer>
    <experiments>3</experiments>
</comment>
<comment type="interaction">
    <interactant intactId="EBI-713484">
        <id>Q8N357</id>
    </interactant>
    <interactant intactId="EBI-355133">
        <id>P05141</id>
        <label>SLC25A5</label>
    </interactant>
    <organismsDiffer>false</organismsDiffer>
    <experiments>2</experiments>
</comment>
<comment type="interaction">
    <interactant intactId="EBI-713484">
        <id>Q8N357</id>
    </interactant>
    <interactant intactId="EBI-6268651">
        <id>Q9NPL8</id>
        <label>TIMMDC1</label>
    </interactant>
    <organismsDiffer>false</organismsDiffer>
    <experiments>3</experiments>
</comment>
<comment type="interaction">
    <interactant intactId="EBI-713484">
        <id>Q8N357</id>
    </interactant>
    <interactant intactId="EBI-8638294">
        <id>Q9NUH8</id>
        <label>TMEM14B</label>
    </interactant>
    <organismsDiffer>false</organismsDiffer>
    <experiments>3</experiments>
</comment>
<comment type="subcellular location">
    <subcellularLocation>
        <location>Mitochondrion</location>
    </subcellularLocation>
    <subcellularLocation>
        <location>Lysosome membrane</location>
        <topology>Multi-pass membrane protein</topology>
    </subcellularLocation>
</comment>
<comment type="tissue specificity">
    <text evidence="3">Expressed in pancreatic ductal adenocarcinoma (PDAC) (at protein level). Strongly expressed in prostate and thyroid. Weakly expressed in lung, heart, liver and kidney.</text>
</comment>
<comment type="similarity">
    <text evidence="4">Belongs to the SLC35F solute transporter family.</text>
</comment>
<feature type="signal peptide" evidence="1">
    <location>
        <begin position="1"/>
        <end position="18"/>
    </location>
</feature>
<feature type="chain" id="PRO_0000232514" description="Solute carrier family 35 member F6">
    <location>
        <begin position="19"/>
        <end position="371"/>
    </location>
</feature>
<feature type="transmembrane region" description="Helical" evidence="1">
    <location>
        <begin position="48"/>
        <end position="68"/>
    </location>
</feature>
<feature type="transmembrane region" description="Helical" evidence="1">
    <location>
        <begin position="89"/>
        <end position="109"/>
    </location>
</feature>
<feature type="transmembrane region" description="Helical" evidence="1">
    <location>
        <begin position="117"/>
        <end position="137"/>
    </location>
</feature>
<feature type="transmembrane region" description="Helical" evidence="1">
    <location>
        <begin position="140"/>
        <end position="160"/>
    </location>
</feature>
<feature type="transmembrane region" description="Helical" evidence="1">
    <location>
        <begin position="176"/>
        <end position="196"/>
    </location>
</feature>
<feature type="transmembrane region" description="Helical" evidence="1">
    <location>
        <begin position="216"/>
        <end position="236"/>
    </location>
</feature>
<feature type="transmembrane region" description="Helical" evidence="1">
    <location>
        <begin position="261"/>
        <end position="281"/>
    </location>
</feature>
<feature type="transmembrane region" description="Helical" evidence="1">
    <location>
        <begin position="295"/>
        <end position="312"/>
    </location>
</feature>
<feature type="transmembrane region" description="Helical" evidence="1">
    <location>
        <begin position="317"/>
        <end position="336"/>
    </location>
</feature>
<feature type="domain" description="EamA">
    <location>
        <begin position="104"/>
        <end position="160"/>
    </location>
</feature>
<feature type="region of interest" description="Disordered" evidence="2">
    <location>
        <begin position="352"/>
        <end position="371"/>
    </location>
</feature>
<feature type="modified residue" description="Phosphothreonine" evidence="5">
    <location>
        <position position="365"/>
    </location>
</feature>
<feature type="glycosylation site" description="N-linked (GlcNAc...) asparagine" evidence="1">
    <location>
        <position position="110"/>
    </location>
</feature>
<feature type="sequence conflict" description="In Ref. 5; BAD96649." evidence="4" ref="5">
    <original>V</original>
    <variation>A</variation>
    <location>
        <position position="107"/>
    </location>
</feature>
<feature type="sequence conflict" description="In Ref. 5; BAD96649." evidence="4" ref="5">
    <original>L</original>
    <variation>P</variation>
    <location>
        <position position="163"/>
    </location>
</feature>
<feature type="sequence conflict" description="In Ref. 2; BAA91255." evidence="4" ref="2">
    <original>E</original>
    <variation>K</variation>
    <location>
        <position position="215"/>
    </location>
</feature>
<feature type="sequence conflict" description="In Ref. 5; BAD96649." evidence="4" ref="5">
    <original>A</original>
    <variation>V</variation>
    <location>
        <position position="274"/>
    </location>
</feature>
<feature type="sequence conflict" description="In Ref. 3; BAC11445." evidence="4" ref="3">
    <original>L</original>
    <variation>S</variation>
    <location>
        <position position="295"/>
    </location>
</feature>
<proteinExistence type="evidence at protein level"/>
<gene>
    <name type="primary">SLC35F6</name>
    <name type="synonym">C2orf18</name>
    <name type="ORF">UNQ3047/PRO9863</name>
</gene>
<dbReference type="EMBL" id="AY358820">
    <property type="protein sequence ID" value="AAQ89179.1"/>
    <property type="molecule type" value="mRNA"/>
</dbReference>
<dbReference type="EMBL" id="AK000562">
    <property type="protein sequence ID" value="BAA91255.1"/>
    <property type="molecule type" value="mRNA"/>
</dbReference>
<dbReference type="EMBL" id="AK075164">
    <property type="protein sequence ID" value="BAC11445.1"/>
    <property type="molecule type" value="mRNA"/>
</dbReference>
<dbReference type="EMBL" id="CR457243">
    <property type="protein sequence ID" value="CAG33524.1"/>
    <property type="molecule type" value="mRNA"/>
</dbReference>
<dbReference type="EMBL" id="AK222929">
    <property type="protein sequence ID" value="BAD96649.1"/>
    <property type="molecule type" value="mRNA"/>
</dbReference>
<dbReference type="EMBL" id="AC011740">
    <property type="protein sequence ID" value="AAX93265.1"/>
    <property type="molecule type" value="Genomic_DNA"/>
</dbReference>
<dbReference type="EMBL" id="CH471053">
    <property type="protein sequence ID" value="EAX00673.1"/>
    <property type="molecule type" value="Genomic_DNA"/>
</dbReference>
<dbReference type="EMBL" id="CH471053">
    <property type="protein sequence ID" value="EAX00676.1"/>
    <property type="molecule type" value="Genomic_DNA"/>
</dbReference>
<dbReference type="EMBL" id="BC028081">
    <property type="protein sequence ID" value="AAH28081.1"/>
    <property type="molecule type" value="mRNA"/>
</dbReference>
<dbReference type="CCDS" id="CCDS1728.1"/>
<dbReference type="RefSeq" id="NP_060347.2">
    <property type="nucleotide sequence ID" value="NM_017877.3"/>
</dbReference>
<dbReference type="SMR" id="Q8N357"/>
<dbReference type="BioGRID" id="120314">
    <property type="interactions" value="100"/>
</dbReference>
<dbReference type="FunCoup" id="Q8N357">
    <property type="interactions" value="2332"/>
</dbReference>
<dbReference type="IntAct" id="Q8N357">
    <property type="interactions" value="62"/>
</dbReference>
<dbReference type="MINT" id="Q8N357"/>
<dbReference type="STRING" id="9606.ENSP00000345528"/>
<dbReference type="TCDB" id="2.A.7.12.13">
    <property type="family name" value="the drug/metabolite transporter (dmt) superfamily"/>
</dbReference>
<dbReference type="GlyCosmos" id="Q8N357">
    <property type="glycosylation" value="1 site, No reported glycans"/>
</dbReference>
<dbReference type="GlyGen" id="Q8N357">
    <property type="glycosylation" value="2 sites, 1 O-linked glycan (1 site)"/>
</dbReference>
<dbReference type="iPTMnet" id="Q8N357"/>
<dbReference type="PhosphoSitePlus" id="Q8N357"/>
<dbReference type="SwissPalm" id="Q8N357"/>
<dbReference type="BioMuta" id="SLC35F6"/>
<dbReference type="DMDM" id="74728772"/>
<dbReference type="jPOST" id="Q8N357"/>
<dbReference type="MassIVE" id="Q8N357"/>
<dbReference type="PaxDb" id="9606-ENSP00000345528"/>
<dbReference type="PeptideAtlas" id="Q8N357"/>
<dbReference type="ProteomicsDB" id="71766"/>
<dbReference type="Pumba" id="Q8N357"/>
<dbReference type="Antibodypedia" id="28001">
    <property type="antibodies" value="132 antibodies from 20 providers"/>
</dbReference>
<dbReference type="DNASU" id="54978"/>
<dbReference type="Ensembl" id="ENST00000344420.10">
    <property type="protein sequence ID" value="ENSP00000345528.5"/>
    <property type="gene ID" value="ENSG00000213699.9"/>
</dbReference>
<dbReference type="GeneID" id="54978"/>
<dbReference type="KEGG" id="hsa:54978"/>
<dbReference type="MANE-Select" id="ENST00000344420.10">
    <property type="protein sequence ID" value="ENSP00000345528.5"/>
    <property type="RefSeq nucleotide sequence ID" value="NM_017877.4"/>
    <property type="RefSeq protein sequence ID" value="NP_060347.2"/>
</dbReference>
<dbReference type="UCSC" id="uc002rhp.2">
    <property type="organism name" value="human"/>
</dbReference>
<dbReference type="AGR" id="HGNC:26055"/>
<dbReference type="CTD" id="54978"/>
<dbReference type="DisGeNET" id="54978"/>
<dbReference type="GeneCards" id="SLC35F6"/>
<dbReference type="HGNC" id="HGNC:26055">
    <property type="gene designation" value="SLC35F6"/>
</dbReference>
<dbReference type="HPA" id="ENSG00000213699">
    <property type="expression patterns" value="Low tissue specificity"/>
</dbReference>
<dbReference type="MIM" id="619667">
    <property type="type" value="gene"/>
</dbReference>
<dbReference type="neXtProt" id="NX_Q8N357"/>
<dbReference type="OpenTargets" id="ENSG00000213699"/>
<dbReference type="PharmGKB" id="PA134913368"/>
<dbReference type="VEuPathDB" id="HostDB:ENSG00000213699"/>
<dbReference type="eggNOG" id="KOG3912">
    <property type="taxonomic scope" value="Eukaryota"/>
</dbReference>
<dbReference type="GeneTree" id="ENSGT00390000017237"/>
<dbReference type="HOGENOM" id="CLU_025028_1_0_1"/>
<dbReference type="InParanoid" id="Q8N357"/>
<dbReference type="OMA" id="FIYKHNV"/>
<dbReference type="OrthoDB" id="29773at2759"/>
<dbReference type="PAN-GO" id="Q8N357">
    <property type="GO annotations" value="2 GO annotations based on evolutionary models"/>
</dbReference>
<dbReference type="PhylomeDB" id="Q8N357"/>
<dbReference type="TreeFam" id="TF105890"/>
<dbReference type="PathwayCommons" id="Q8N357"/>
<dbReference type="SignaLink" id="Q8N357"/>
<dbReference type="BioGRID-ORCS" id="54978">
    <property type="hits" value="12 hits in 1161 CRISPR screens"/>
</dbReference>
<dbReference type="ChiTaRS" id="SLC35F6">
    <property type="organism name" value="human"/>
</dbReference>
<dbReference type="GeneWiki" id="C2orf18"/>
<dbReference type="GenomeRNAi" id="54978"/>
<dbReference type="Pharos" id="Q8N357">
    <property type="development level" value="Tbio"/>
</dbReference>
<dbReference type="PRO" id="PR:Q8N357"/>
<dbReference type="Proteomes" id="UP000005640">
    <property type="component" value="Chromosome 2"/>
</dbReference>
<dbReference type="RNAct" id="Q8N357">
    <property type="molecule type" value="protein"/>
</dbReference>
<dbReference type="Bgee" id="ENSG00000213699">
    <property type="expression patterns" value="Expressed in nipple and 182 other cell types or tissues"/>
</dbReference>
<dbReference type="ExpressionAtlas" id="Q8N357">
    <property type="expression patterns" value="baseline and differential"/>
</dbReference>
<dbReference type="GO" id="GO:0005829">
    <property type="term" value="C:cytosol"/>
    <property type="evidence" value="ECO:0000314"/>
    <property type="project" value="HPA"/>
</dbReference>
<dbReference type="GO" id="GO:0070062">
    <property type="term" value="C:extracellular exosome"/>
    <property type="evidence" value="ECO:0007005"/>
    <property type="project" value="UniProtKB"/>
</dbReference>
<dbReference type="GO" id="GO:0043231">
    <property type="term" value="C:intracellular membrane-bounded organelle"/>
    <property type="evidence" value="ECO:0000314"/>
    <property type="project" value="HPA"/>
</dbReference>
<dbReference type="GO" id="GO:0005765">
    <property type="term" value="C:lysosomal membrane"/>
    <property type="evidence" value="ECO:0000314"/>
    <property type="project" value="UniProtKB"/>
</dbReference>
<dbReference type="GO" id="GO:0016020">
    <property type="term" value="C:membrane"/>
    <property type="evidence" value="ECO:0000318"/>
    <property type="project" value="GO_Central"/>
</dbReference>
<dbReference type="GO" id="GO:0005739">
    <property type="term" value="C:mitochondrion"/>
    <property type="evidence" value="ECO:0000314"/>
    <property type="project" value="UniProtKB"/>
</dbReference>
<dbReference type="GO" id="GO:0005654">
    <property type="term" value="C:nucleoplasm"/>
    <property type="evidence" value="ECO:0000314"/>
    <property type="project" value="HPA"/>
</dbReference>
<dbReference type="GO" id="GO:0022857">
    <property type="term" value="F:transmembrane transporter activity"/>
    <property type="evidence" value="ECO:0007669"/>
    <property type="project" value="InterPro"/>
</dbReference>
<dbReference type="GO" id="GO:1901029">
    <property type="term" value="P:negative regulation of mitochondrial outer membrane permeabilization involved in apoptotic signaling pathway"/>
    <property type="evidence" value="ECO:0000315"/>
    <property type="project" value="UniProtKB"/>
</dbReference>
<dbReference type="GO" id="GO:0008284">
    <property type="term" value="P:positive regulation of cell population proliferation"/>
    <property type="evidence" value="ECO:0000315"/>
    <property type="project" value="UniProtKB"/>
</dbReference>
<dbReference type="InterPro" id="IPR009262">
    <property type="entry name" value="SLC35_F1/F2/F6"/>
</dbReference>
<dbReference type="InterPro" id="IPR012404">
    <property type="entry name" value="UCP036436"/>
</dbReference>
<dbReference type="PANTHER" id="PTHR13146">
    <property type="match status" value="1"/>
</dbReference>
<dbReference type="PANTHER" id="PTHR13146:SF0">
    <property type="entry name" value="SOLUTE CARRIER FAMILY 35 MEMBER F6"/>
    <property type="match status" value="1"/>
</dbReference>
<dbReference type="Pfam" id="PF06027">
    <property type="entry name" value="SLC35F"/>
    <property type="match status" value="1"/>
</dbReference>
<dbReference type="PIRSF" id="PIRSF036436">
    <property type="entry name" value="UCP036436"/>
    <property type="match status" value="1"/>
</dbReference>
<dbReference type="SUPFAM" id="SSF103481">
    <property type="entry name" value="Multidrug resistance efflux transporter EmrE"/>
    <property type="match status" value="1"/>
</dbReference>
<accession>Q8N357</accession>
<accession>D6W543</accession>
<accession>Q53GK2</accession>
<accession>Q8NBX6</accession>
<accession>Q9NWX0</accession>
<protein>
    <recommendedName>
        <fullName>Solute carrier family 35 member F6</fullName>
    </recommendedName>
    <alternativeName>
        <fullName>ANT2-binding protein</fullName>
        <shortName>ANT2BP</shortName>
    </alternativeName>
    <alternativeName>
        <fullName>Transport and Golgi organization 9 homolog</fullName>
    </alternativeName>
</protein>
<keyword id="KW-0325">Glycoprotein</keyword>
<keyword id="KW-0458">Lysosome</keyword>
<keyword id="KW-0472">Membrane</keyword>
<keyword id="KW-0496">Mitochondrion</keyword>
<keyword id="KW-0597">Phosphoprotein</keyword>
<keyword id="KW-1267">Proteomics identification</keyword>
<keyword id="KW-1185">Reference proteome</keyword>
<keyword id="KW-0732">Signal</keyword>
<keyword id="KW-0812">Transmembrane</keyword>
<keyword id="KW-1133">Transmembrane helix</keyword>
<keyword id="KW-0813">Transport</keyword>
<sequence>MAWTKYQLFLAGLMLVTGSINTLSAKWADNFMAEGCGGSKEHSFQHPFLQAVGMFLGEFSCLAAFYLLRCRAAGQSDSSVDPQQPFNPLLFLPPALCDMTGTSLMYVALNMTSASSFQMLRGAVIIFTGLFSVAFLGRRLVLSQWLGILATIAGLVVVGLADLLSKHDSQHKLSEVITGDLLIIMAQIIVAIQMVLEEKFVYKHNVHPLRAVGTEGLFGFVILSLLLVPMYYIPAGSFSGNPRGTLEDALDAFCQVGQQPLIAVALLGNISSIAFFNFAGISVTKELSATTRMVLDSLRTVVIWALSLALGWEAFHALQILGFLILLIGTALYNGLHRPLLGRLSRGRPLAEESEQERLLGGTRTPINDAS</sequence>
<name>S35F6_HUMAN</name>
<reference key="1">
    <citation type="journal article" date="2003" name="Genome Res.">
        <title>The secreted protein discovery initiative (SPDI), a large-scale effort to identify novel human secreted and transmembrane proteins: a bioinformatics assessment.</title>
        <authorList>
            <person name="Clark H.F."/>
            <person name="Gurney A.L."/>
            <person name="Abaya E."/>
            <person name="Baker K."/>
            <person name="Baldwin D.T."/>
            <person name="Brush J."/>
            <person name="Chen J."/>
            <person name="Chow B."/>
            <person name="Chui C."/>
            <person name="Crowley C."/>
            <person name="Currell B."/>
            <person name="Deuel B."/>
            <person name="Dowd P."/>
            <person name="Eaton D."/>
            <person name="Foster J.S."/>
            <person name="Grimaldi C."/>
            <person name="Gu Q."/>
            <person name="Hass P.E."/>
            <person name="Heldens S."/>
            <person name="Huang A."/>
            <person name="Kim H.S."/>
            <person name="Klimowski L."/>
            <person name="Jin Y."/>
            <person name="Johnson S."/>
            <person name="Lee J."/>
            <person name="Lewis L."/>
            <person name="Liao D."/>
            <person name="Mark M.R."/>
            <person name="Robbie E."/>
            <person name="Sanchez C."/>
            <person name="Schoenfeld J."/>
            <person name="Seshagiri S."/>
            <person name="Simmons L."/>
            <person name="Singh J."/>
            <person name="Smith V."/>
            <person name="Stinson J."/>
            <person name="Vagts A."/>
            <person name="Vandlen R.L."/>
            <person name="Watanabe C."/>
            <person name="Wieand D."/>
            <person name="Woods K."/>
            <person name="Xie M.-H."/>
            <person name="Yansura D.G."/>
            <person name="Yi S."/>
            <person name="Yu G."/>
            <person name="Yuan J."/>
            <person name="Zhang M."/>
            <person name="Zhang Z."/>
            <person name="Goddard A.D."/>
            <person name="Wood W.I."/>
            <person name="Godowski P.J."/>
            <person name="Gray A.M."/>
        </authorList>
    </citation>
    <scope>NUCLEOTIDE SEQUENCE [LARGE SCALE MRNA]</scope>
</reference>
<reference key="2">
    <citation type="journal article" date="2004" name="Nat. Genet.">
        <title>Complete sequencing and characterization of 21,243 full-length human cDNAs.</title>
        <authorList>
            <person name="Ota T."/>
            <person name="Suzuki Y."/>
            <person name="Nishikawa T."/>
            <person name="Otsuki T."/>
            <person name="Sugiyama T."/>
            <person name="Irie R."/>
            <person name="Wakamatsu A."/>
            <person name="Hayashi K."/>
            <person name="Sato H."/>
            <person name="Nagai K."/>
            <person name="Kimura K."/>
            <person name="Makita H."/>
            <person name="Sekine M."/>
            <person name="Obayashi M."/>
            <person name="Nishi T."/>
            <person name="Shibahara T."/>
            <person name="Tanaka T."/>
            <person name="Ishii S."/>
            <person name="Yamamoto J."/>
            <person name="Saito K."/>
            <person name="Kawai Y."/>
            <person name="Isono Y."/>
            <person name="Nakamura Y."/>
            <person name="Nagahari K."/>
            <person name="Murakami K."/>
            <person name="Yasuda T."/>
            <person name="Iwayanagi T."/>
            <person name="Wagatsuma M."/>
            <person name="Shiratori A."/>
            <person name="Sudo H."/>
            <person name="Hosoiri T."/>
            <person name="Kaku Y."/>
            <person name="Kodaira H."/>
            <person name="Kondo H."/>
            <person name="Sugawara M."/>
            <person name="Takahashi M."/>
            <person name="Kanda K."/>
            <person name="Yokoi T."/>
            <person name="Furuya T."/>
            <person name="Kikkawa E."/>
            <person name="Omura Y."/>
            <person name="Abe K."/>
            <person name="Kamihara K."/>
            <person name="Katsuta N."/>
            <person name="Sato K."/>
            <person name="Tanikawa M."/>
            <person name="Yamazaki M."/>
            <person name="Ninomiya K."/>
            <person name="Ishibashi T."/>
            <person name="Yamashita H."/>
            <person name="Murakawa K."/>
            <person name="Fujimori K."/>
            <person name="Tanai H."/>
            <person name="Kimata M."/>
            <person name="Watanabe M."/>
            <person name="Hiraoka S."/>
            <person name="Chiba Y."/>
            <person name="Ishida S."/>
            <person name="Ono Y."/>
            <person name="Takiguchi S."/>
            <person name="Watanabe S."/>
            <person name="Yosida M."/>
            <person name="Hotuta T."/>
            <person name="Kusano J."/>
            <person name="Kanehori K."/>
            <person name="Takahashi-Fujii A."/>
            <person name="Hara H."/>
            <person name="Tanase T.-O."/>
            <person name="Nomura Y."/>
            <person name="Togiya S."/>
            <person name="Komai F."/>
            <person name="Hara R."/>
            <person name="Takeuchi K."/>
            <person name="Arita M."/>
            <person name="Imose N."/>
            <person name="Musashino K."/>
            <person name="Yuuki H."/>
            <person name="Oshima A."/>
            <person name="Sasaki N."/>
            <person name="Aotsuka S."/>
            <person name="Yoshikawa Y."/>
            <person name="Matsunawa H."/>
            <person name="Ichihara T."/>
            <person name="Shiohata N."/>
            <person name="Sano S."/>
            <person name="Moriya S."/>
            <person name="Momiyama H."/>
            <person name="Satoh N."/>
            <person name="Takami S."/>
            <person name="Terashima Y."/>
            <person name="Suzuki O."/>
            <person name="Nakagawa S."/>
            <person name="Senoh A."/>
            <person name="Mizoguchi H."/>
            <person name="Goto Y."/>
            <person name="Shimizu F."/>
            <person name="Wakebe H."/>
            <person name="Hishigaki H."/>
            <person name="Watanabe T."/>
            <person name="Sugiyama A."/>
            <person name="Takemoto M."/>
            <person name="Kawakami B."/>
            <person name="Yamazaki M."/>
            <person name="Watanabe K."/>
            <person name="Kumagai A."/>
            <person name="Itakura S."/>
            <person name="Fukuzumi Y."/>
            <person name="Fujimori Y."/>
            <person name="Komiyama M."/>
            <person name="Tashiro H."/>
            <person name="Tanigami A."/>
            <person name="Fujiwara T."/>
            <person name="Ono T."/>
            <person name="Yamada K."/>
            <person name="Fujii Y."/>
            <person name="Ozaki K."/>
            <person name="Hirao M."/>
            <person name="Ohmori Y."/>
            <person name="Kawabata A."/>
            <person name="Hikiji T."/>
            <person name="Kobatake N."/>
            <person name="Inagaki H."/>
            <person name="Ikema Y."/>
            <person name="Okamoto S."/>
            <person name="Okitani R."/>
            <person name="Kawakami T."/>
            <person name="Noguchi S."/>
            <person name="Itoh T."/>
            <person name="Shigeta K."/>
            <person name="Senba T."/>
            <person name="Matsumura K."/>
            <person name="Nakajima Y."/>
            <person name="Mizuno T."/>
            <person name="Morinaga M."/>
            <person name="Sasaki M."/>
            <person name="Togashi T."/>
            <person name="Oyama M."/>
            <person name="Hata H."/>
            <person name="Watanabe M."/>
            <person name="Komatsu T."/>
            <person name="Mizushima-Sugano J."/>
            <person name="Satoh T."/>
            <person name="Shirai Y."/>
            <person name="Takahashi Y."/>
            <person name="Nakagawa K."/>
            <person name="Okumura K."/>
            <person name="Nagase T."/>
            <person name="Nomura N."/>
            <person name="Kikuchi H."/>
            <person name="Masuho Y."/>
            <person name="Yamashita R."/>
            <person name="Nakai K."/>
            <person name="Yada T."/>
            <person name="Nakamura Y."/>
            <person name="Ohara O."/>
            <person name="Isogai T."/>
            <person name="Sugano S."/>
        </authorList>
    </citation>
    <scope>NUCLEOTIDE SEQUENCE [LARGE SCALE MRNA]</scope>
</reference>
<reference key="3">
    <citation type="journal article" date="2005" name="DNA Res.">
        <title>Signal sequence and keyword trap in silico for selection of full-length human cDNAs encoding secretion or membrane proteins from oligo-capped cDNA libraries.</title>
        <authorList>
            <person name="Otsuki T."/>
            <person name="Ota T."/>
            <person name="Nishikawa T."/>
            <person name="Hayashi K."/>
            <person name="Suzuki Y."/>
            <person name="Yamamoto J."/>
            <person name="Wakamatsu A."/>
            <person name="Kimura K."/>
            <person name="Sakamoto K."/>
            <person name="Hatano N."/>
            <person name="Kawai Y."/>
            <person name="Ishii S."/>
            <person name="Saito K."/>
            <person name="Kojima S."/>
            <person name="Sugiyama T."/>
            <person name="Ono T."/>
            <person name="Okano K."/>
            <person name="Yoshikawa Y."/>
            <person name="Aotsuka S."/>
            <person name="Sasaki N."/>
            <person name="Hattori A."/>
            <person name="Okumura K."/>
            <person name="Nagai K."/>
            <person name="Sugano S."/>
            <person name="Isogai T."/>
        </authorList>
    </citation>
    <scope>NUCLEOTIDE SEQUENCE [LARGE SCALE MRNA]</scope>
    <source>
        <tissue>Placenta</tissue>
    </source>
</reference>
<reference key="4">
    <citation type="submission" date="2004-06" db="EMBL/GenBank/DDBJ databases">
        <title>Cloning of human full open reading frames in Gateway(TM) system entry vector (pDONR201).</title>
        <authorList>
            <person name="Ebert L."/>
            <person name="Schick M."/>
            <person name="Neubert P."/>
            <person name="Schatten R."/>
            <person name="Henze S."/>
            <person name="Korn B."/>
        </authorList>
    </citation>
    <scope>NUCLEOTIDE SEQUENCE [LARGE SCALE MRNA]</scope>
</reference>
<reference key="5">
    <citation type="submission" date="2005-04" db="EMBL/GenBank/DDBJ databases">
        <authorList>
            <person name="Suzuki Y."/>
            <person name="Sugano S."/>
            <person name="Totoki Y."/>
            <person name="Toyoda A."/>
            <person name="Takeda T."/>
            <person name="Sakaki Y."/>
            <person name="Tanaka A."/>
            <person name="Yokoyama S."/>
        </authorList>
    </citation>
    <scope>NUCLEOTIDE SEQUENCE [LARGE SCALE MRNA]</scope>
    <source>
        <tissue>Kidney</tissue>
    </source>
</reference>
<reference key="6">
    <citation type="journal article" date="2005" name="Nature">
        <title>Generation and annotation of the DNA sequences of human chromosomes 2 and 4.</title>
        <authorList>
            <person name="Hillier L.W."/>
            <person name="Graves T.A."/>
            <person name="Fulton R.S."/>
            <person name="Fulton L.A."/>
            <person name="Pepin K.H."/>
            <person name="Minx P."/>
            <person name="Wagner-McPherson C."/>
            <person name="Layman D."/>
            <person name="Wylie K."/>
            <person name="Sekhon M."/>
            <person name="Becker M.C."/>
            <person name="Fewell G.A."/>
            <person name="Delehaunty K.D."/>
            <person name="Miner T.L."/>
            <person name="Nash W.E."/>
            <person name="Kremitzki C."/>
            <person name="Oddy L."/>
            <person name="Du H."/>
            <person name="Sun H."/>
            <person name="Bradshaw-Cordum H."/>
            <person name="Ali J."/>
            <person name="Carter J."/>
            <person name="Cordes M."/>
            <person name="Harris A."/>
            <person name="Isak A."/>
            <person name="van Brunt A."/>
            <person name="Nguyen C."/>
            <person name="Du F."/>
            <person name="Courtney L."/>
            <person name="Kalicki J."/>
            <person name="Ozersky P."/>
            <person name="Abbott S."/>
            <person name="Armstrong J."/>
            <person name="Belter E.A."/>
            <person name="Caruso L."/>
            <person name="Cedroni M."/>
            <person name="Cotton M."/>
            <person name="Davidson T."/>
            <person name="Desai A."/>
            <person name="Elliott G."/>
            <person name="Erb T."/>
            <person name="Fronick C."/>
            <person name="Gaige T."/>
            <person name="Haakenson W."/>
            <person name="Haglund K."/>
            <person name="Holmes A."/>
            <person name="Harkins R."/>
            <person name="Kim K."/>
            <person name="Kruchowski S.S."/>
            <person name="Strong C.M."/>
            <person name="Grewal N."/>
            <person name="Goyea E."/>
            <person name="Hou S."/>
            <person name="Levy A."/>
            <person name="Martinka S."/>
            <person name="Mead K."/>
            <person name="McLellan M.D."/>
            <person name="Meyer R."/>
            <person name="Randall-Maher J."/>
            <person name="Tomlinson C."/>
            <person name="Dauphin-Kohlberg S."/>
            <person name="Kozlowicz-Reilly A."/>
            <person name="Shah N."/>
            <person name="Swearengen-Shahid S."/>
            <person name="Snider J."/>
            <person name="Strong J.T."/>
            <person name="Thompson J."/>
            <person name="Yoakum M."/>
            <person name="Leonard S."/>
            <person name="Pearman C."/>
            <person name="Trani L."/>
            <person name="Radionenko M."/>
            <person name="Waligorski J.E."/>
            <person name="Wang C."/>
            <person name="Rock S.M."/>
            <person name="Tin-Wollam A.-M."/>
            <person name="Maupin R."/>
            <person name="Latreille P."/>
            <person name="Wendl M.C."/>
            <person name="Yang S.-P."/>
            <person name="Pohl C."/>
            <person name="Wallis J.W."/>
            <person name="Spieth J."/>
            <person name="Bieri T.A."/>
            <person name="Berkowicz N."/>
            <person name="Nelson J.O."/>
            <person name="Osborne J."/>
            <person name="Ding L."/>
            <person name="Meyer R."/>
            <person name="Sabo A."/>
            <person name="Shotland Y."/>
            <person name="Sinha P."/>
            <person name="Wohldmann P.E."/>
            <person name="Cook L.L."/>
            <person name="Hickenbotham M.T."/>
            <person name="Eldred J."/>
            <person name="Williams D."/>
            <person name="Jones T.A."/>
            <person name="She X."/>
            <person name="Ciccarelli F.D."/>
            <person name="Izaurralde E."/>
            <person name="Taylor J."/>
            <person name="Schmutz J."/>
            <person name="Myers R.M."/>
            <person name="Cox D.R."/>
            <person name="Huang X."/>
            <person name="McPherson J.D."/>
            <person name="Mardis E.R."/>
            <person name="Clifton S.W."/>
            <person name="Warren W.C."/>
            <person name="Chinwalla A.T."/>
            <person name="Eddy S.R."/>
            <person name="Marra M.A."/>
            <person name="Ovcharenko I."/>
            <person name="Furey T.S."/>
            <person name="Miller W."/>
            <person name="Eichler E.E."/>
            <person name="Bork P."/>
            <person name="Suyama M."/>
            <person name="Torrents D."/>
            <person name="Waterston R.H."/>
            <person name="Wilson R.K."/>
        </authorList>
    </citation>
    <scope>NUCLEOTIDE SEQUENCE [LARGE SCALE GENOMIC DNA]</scope>
</reference>
<reference key="7">
    <citation type="submission" date="2005-09" db="EMBL/GenBank/DDBJ databases">
        <authorList>
            <person name="Mural R.J."/>
            <person name="Istrail S."/>
            <person name="Sutton G.G."/>
            <person name="Florea L."/>
            <person name="Halpern A.L."/>
            <person name="Mobarry C.M."/>
            <person name="Lippert R."/>
            <person name="Walenz B."/>
            <person name="Shatkay H."/>
            <person name="Dew I."/>
            <person name="Miller J.R."/>
            <person name="Flanigan M.J."/>
            <person name="Edwards N.J."/>
            <person name="Bolanos R."/>
            <person name="Fasulo D."/>
            <person name="Halldorsson B.V."/>
            <person name="Hannenhalli S."/>
            <person name="Turner R."/>
            <person name="Yooseph S."/>
            <person name="Lu F."/>
            <person name="Nusskern D.R."/>
            <person name="Shue B.C."/>
            <person name="Zheng X.H."/>
            <person name="Zhong F."/>
            <person name="Delcher A.L."/>
            <person name="Huson D.H."/>
            <person name="Kravitz S.A."/>
            <person name="Mouchard L."/>
            <person name="Reinert K."/>
            <person name="Remington K.A."/>
            <person name="Clark A.G."/>
            <person name="Waterman M.S."/>
            <person name="Eichler E.E."/>
            <person name="Adams M.D."/>
            <person name="Hunkapiller M.W."/>
            <person name="Myers E.W."/>
            <person name="Venter J.C."/>
        </authorList>
    </citation>
    <scope>NUCLEOTIDE SEQUENCE [LARGE SCALE GENOMIC DNA]</scope>
</reference>
<reference key="8">
    <citation type="journal article" date="2004" name="Genome Res.">
        <title>The status, quality, and expansion of the NIH full-length cDNA project: the Mammalian Gene Collection (MGC).</title>
        <authorList>
            <consortium name="The MGC Project Team"/>
        </authorList>
    </citation>
    <scope>NUCLEOTIDE SEQUENCE [LARGE SCALE MRNA]</scope>
    <source>
        <tissue>Blood</tissue>
    </source>
</reference>
<reference key="9">
    <citation type="journal article" date="2008" name="Mol. Cell">
        <title>Kinase-selective enrichment enables quantitative phosphoproteomics of the kinome across the cell cycle.</title>
        <authorList>
            <person name="Daub H."/>
            <person name="Olsen J.V."/>
            <person name="Bairlein M."/>
            <person name="Gnad F."/>
            <person name="Oppermann F.S."/>
            <person name="Korner R."/>
            <person name="Greff Z."/>
            <person name="Keri G."/>
            <person name="Stemmann O."/>
            <person name="Mann M."/>
        </authorList>
    </citation>
    <scope>IDENTIFICATION BY MASS SPECTROMETRY [LARGE SCALE ANALYSIS]</scope>
    <source>
        <tissue>Cervix carcinoma</tissue>
    </source>
</reference>
<reference key="10">
    <citation type="journal article" date="2008" name="Proc. Natl. Acad. Sci. U.S.A.">
        <title>A quantitative atlas of mitotic phosphorylation.</title>
        <authorList>
            <person name="Dephoure N."/>
            <person name="Zhou C."/>
            <person name="Villen J."/>
            <person name="Beausoleil S.A."/>
            <person name="Bakalarski C.E."/>
            <person name="Elledge S.J."/>
            <person name="Gygi S.P."/>
        </authorList>
    </citation>
    <scope>PHOSPHORYLATION [LARGE SCALE ANALYSIS] AT THR-365</scope>
    <scope>IDENTIFICATION BY MASS SPECTROMETRY [LARGE SCALE ANALYSIS]</scope>
    <source>
        <tissue>Cervix carcinoma</tissue>
    </source>
</reference>
<reference key="11">
    <citation type="journal article" date="2009" name="Cancer Sci.">
        <title>Identification of C2orf18, termed ANT2BP (ANT2-binding protein), as one of the key molecules involved in pancreatic carcinogenesis.</title>
        <authorList>
            <person name="Kashiwaya K."/>
            <person name="Hosokawa M."/>
            <person name="Eguchi H."/>
            <person name="Ohigashi H."/>
            <person name="Ishikawa O."/>
            <person name="Shinomura Y."/>
            <person name="Nakamura Y."/>
            <person name="Nakagawa H."/>
        </authorList>
    </citation>
    <scope>FUNCTION</scope>
    <scope>INTERACTION WITH SLC25A5</scope>
    <scope>SUBCELLULAR LOCATION</scope>
    <scope>TISSUE SPECIFICITY</scope>
</reference>
<reference key="12">
    <citation type="journal article" date="2010" name="Proteomics">
        <title>The proteome of lysosomes.</title>
        <authorList>
            <person name="Schroeder B.A."/>
            <person name="Wrocklage C."/>
            <person name="Hasilik A."/>
            <person name="Saftig P."/>
        </authorList>
    </citation>
    <scope>REVIEW</scope>
    <scope>SUBCELLULAR LOCATION</scope>
</reference>
<reference key="13">
    <citation type="journal article" date="2011" name="BMC Syst. Biol.">
        <title>Initial characterization of the human central proteome.</title>
        <authorList>
            <person name="Burkard T.R."/>
            <person name="Planyavsky M."/>
            <person name="Kaupe I."/>
            <person name="Breitwieser F.P."/>
            <person name="Buerckstuemmer T."/>
            <person name="Bennett K.L."/>
            <person name="Superti-Furga G."/>
            <person name="Colinge J."/>
        </authorList>
    </citation>
    <scope>IDENTIFICATION BY MASS SPECTROMETRY [LARGE SCALE ANALYSIS]</scope>
</reference>